<sequence length="570" mass="60376">MSFGVPHSGGSRRSKWDQAGPDADAGSAPTGALDAAAAVAAKINAMLVAKGKLKPSQISSAAPVDKAAGAGGNKLKDDLVVAEVEINDVPLTCRNLLTRGQTQDEISRVSGAAVSTRGRFMTVEEKSKALPSDRPLYLHVQGQTRDLVDKAVNRIKEIITNGVVKAATNSTYSGATVTVYQQSGPSVPTIPSAPHKPHYPGGMHYVQDKVFVGLDQALQGFNVKERVEGPSCSFLQHIQAETGAKVFLRGKGSGCLEPASGREAFEPMYIYISHPKPEGLASAKTLCENLLQTVHAEYSRYLNQMSSMMPTQGFIHPPVVNGLPPQPPYYSPAGFQPSYPAPVPPPPPPIAPQYPVAPVAPAPVPPPNAQYPITPVPAHVPTQTLLPAAFPPTAPVPPKLTAPPNPPQKRRFTEEVDEMDRGLLGYQHGPIHMTNLGAGMPVGSSETSGPPSAASSVPVRERDSSRQLMPPPCAPALLKPLRPLKADESPSAPSLLEPQVKRMRTGLVAYAGDSSDEEEDHGPSRAAVTAAGNPGAGWNPYRCPPSPPHRPKTQTAPQPTQQNMPFWMAP</sequence>
<feature type="chain" id="PRO_0000296672" description="KH homology domain-containing protein 4">
    <location>
        <begin position="1"/>
        <end position="570"/>
    </location>
</feature>
<feature type="domain" description="KH 1" evidence="1">
    <location>
        <begin position="77"/>
        <end position="157"/>
    </location>
</feature>
<feature type="domain" description="KH 2" evidence="1">
    <location>
        <begin position="210"/>
        <end position="292"/>
    </location>
</feature>
<feature type="region of interest" description="Disordered" evidence="2">
    <location>
        <begin position="1"/>
        <end position="29"/>
    </location>
</feature>
<feature type="region of interest" description="Disordered" evidence="2">
    <location>
        <begin position="391"/>
        <end position="410"/>
    </location>
</feature>
<feature type="region of interest" description="Required for nuclear retention" evidence="1">
    <location>
        <begin position="427"/>
        <end position="497"/>
    </location>
</feature>
<feature type="region of interest" description="Disordered" evidence="2">
    <location>
        <begin position="438"/>
        <end position="500"/>
    </location>
</feature>
<feature type="region of interest" description="Disordered" evidence="2">
    <location>
        <begin position="512"/>
        <end position="570"/>
    </location>
</feature>
<feature type="compositionally biased region" description="Pro residues" evidence="2">
    <location>
        <begin position="391"/>
        <end position="407"/>
    </location>
</feature>
<feature type="compositionally biased region" description="Low complexity" evidence="2">
    <location>
        <begin position="553"/>
        <end position="562"/>
    </location>
</feature>
<feature type="sequence conflict" description="In Ref. 1; AAH45375." evidence="3" ref="1">
    <location>
        <position position="464"/>
    </location>
</feature>
<reference key="1">
    <citation type="submission" date="2004-02" db="EMBL/GenBank/DDBJ databases">
        <authorList>
            <consortium name="NIH - Zebrafish Gene Collection (ZGC) project"/>
        </authorList>
    </citation>
    <scope>NUCLEOTIDE SEQUENCE [LARGE SCALE MRNA]</scope>
    <source>
        <tissue>Embryo</tissue>
    </source>
</reference>
<dbReference type="EMBL" id="BC045375">
    <property type="protein sequence ID" value="AAH45375.1"/>
    <property type="molecule type" value="mRNA"/>
</dbReference>
<dbReference type="EMBL" id="BC066381">
    <property type="protein sequence ID" value="AAH66381.1"/>
    <property type="molecule type" value="mRNA"/>
</dbReference>
<dbReference type="RefSeq" id="NP_997758.1">
    <property type="nucleotide sequence ID" value="NM_212593.1"/>
</dbReference>
<dbReference type="SMR" id="Q6NZ18"/>
<dbReference type="FunCoup" id="Q6NZ18">
    <property type="interactions" value="976"/>
</dbReference>
<dbReference type="STRING" id="7955.ENSDARP00000059559"/>
<dbReference type="PaxDb" id="7955-ENSDARP00000059559"/>
<dbReference type="GeneID" id="321686"/>
<dbReference type="KEGG" id="dre:321686"/>
<dbReference type="AGR" id="ZFIN:ZDB-GENE-030131-405"/>
<dbReference type="CTD" id="22889"/>
<dbReference type="ZFIN" id="ZDB-GENE-030131-405">
    <property type="gene designation" value="khdc4"/>
</dbReference>
<dbReference type="eggNOG" id="KOG1960">
    <property type="taxonomic scope" value="Eukaryota"/>
</dbReference>
<dbReference type="InParanoid" id="Q6NZ18"/>
<dbReference type="OrthoDB" id="397265at2759"/>
<dbReference type="PhylomeDB" id="Q6NZ18"/>
<dbReference type="PRO" id="PR:Q6NZ18"/>
<dbReference type="Proteomes" id="UP000000437">
    <property type="component" value="Chromosome 16"/>
</dbReference>
<dbReference type="GO" id="GO:0005737">
    <property type="term" value="C:cytoplasm"/>
    <property type="evidence" value="ECO:0000250"/>
    <property type="project" value="UniProtKB"/>
</dbReference>
<dbReference type="GO" id="GO:0005634">
    <property type="term" value="C:nucleus"/>
    <property type="evidence" value="ECO:0000250"/>
    <property type="project" value="UniProtKB"/>
</dbReference>
<dbReference type="GO" id="GO:0003723">
    <property type="term" value="F:RNA binding"/>
    <property type="evidence" value="ECO:0000250"/>
    <property type="project" value="UniProtKB"/>
</dbReference>
<dbReference type="GO" id="GO:0006376">
    <property type="term" value="P:mRNA splice site recognition"/>
    <property type="evidence" value="ECO:0000250"/>
    <property type="project" value="UniProtKB"/>
</dbReference>
<dbReference type="CDD" id="cd22385">
    <property type="entry name" value="KH-I_KHDC4_rpt1"/>
    <property type="match status" value="1"/>
</dbReference>
<dbReference type="CDD" id="cd22386">
    <property type="entry name" value="KH-I_KHDC4_rpt2"/>
    <property type="match status" value="1"/>
</dbReference>
<dbReference type="FunFam" id="3.30.1370.10:FF:000066">
    <property type="entry name" value="KH domain containing 4, pre-mRNA splicing factor"/>
    <property type="match status" value="1"/>
</dbReference>
<dbReference type="FunFam" id="3.30.1370.10:FF:000035">
    <property type="entry name" value="KH domain-containing 4, pre-mRNA-splicing factor"/>
    <property type="match status" value="1"/>
</dbReference>
<dbReference type="Gene3D" id="3.30.1370.10">
    <property type="entry name" value="K Homology domain, type 1"/>
    <property type="match status" value="2"/>
</dbReference>
<dbReference type="InterPro" id="IPR055256">
    <property type="entry name" value="KH_1_KHDC4/BBP-like"/>
</dbReference>
<dbReference type="InterPro" id="IPR036612">
    <property type="entry name" value="KH_dom_type_1_sf"/>
</dbReference>
<dbReference type="InterPro" id="IPR047890">
    <property type="entry name" value="KHDC4_KH-I_first"/>
</dbReference>
<dbReference type="InterPro" id="IPR047889">
    <property type="entry name" value="KHDC4_KH-I_second"/>
</dbReference>
<dbReference type="InterPro" id="IPR056149">
    <property type="entry name" value="PRP5/DDX46/KHDC4_KH"/>
</dbReference>
<dbReference type="InterPro" id="IPR031121">
    <property type="entry name" value="RIK/BLOM7"/>
</dbReference>
<dbReference type="PANTHER" id="PTHR15744">
    <property type="entry name" value="BLOM7"/>
    <property type="match status" value="1"/>
</dbReference>
<dbReference type="PANTHER" id="PTHR15744:SF1">
    <property type="entry name" value="KH HOMOLOGY DOMAIN-CONTAINING PROTEIN 4"/>
    <property type="match status" value="1"/>
</dbReference>
<dbReference type="Pfam" id="PF22675">
    <property type="entry name" value="KH-I_KHDC4-BBP"/>
    <property type="match status" value="1"/>
</dbReference>
<dbReference type="Pfam" id="PF23469">
    <property type="entry name" value="KH_12"/>
    <property type="match status" value="1"/>
</dbReference>
<dbReference type="SUPFAM" id="SSF54791">
    <property type="entry name" value="Eukaryotic type KH-domain (KH-domain type I)"/>
    <property type="match status" value="2"/>
</dbReference>
<keyword id="KW-0963">Cytoplasm</keyword>
<keyword id="KW-0507">mRNA processing</keyword>
<keyword id="KW-0508">mRNA splicing</keyword>
<keyword id="KW-0539">Nucleus</keyword>
<keyword id="KW-0597">Phosphoprotein</keyword>
<keyword id="KW-1185">Reference proteome</keyword>
<keyword id="KW-0694">RNA-binding</keyword>
<proteinExistence type="evidence at transcript level"/>
<gene>
    <name type="primary">khdc4</name>
    <name evidence="1" type="synonym">blom7</name>
    <name type="synonym">Kiaa0907</name>
</gene>
<organism>
    <name type="scientific">Danio rerio</name>
    <name type="common">Zebrafish</name>
    <name type="synonym">Brachydanio rerio</name>
    <dbReference type="NCBI Taxonomy" id="7955"/>
    <lineage>
        <taxon>Eukaryota</taxon>
        <taxon>Metazoa</taxon>
        <taxon>Chordata</taxon>
        <taxon>Craniata</taxon>
        <taxon>Vertebrata</taxon>
        <taxon>Euteleostomi</taxon>
        <taxon>Actinopterygii</taxon>
        <taxon>Neopterygii</taxon>
        <taxon>Teleostei</taxon>
        <taxon>Ostariophysi</taxon>
        <taxon>Cypriniformes</taxon>
        <taxon>Danionidae</taxon>
        <taxon>Danioninae</taxon>
        <taxon>Danio</taxon>
    </lineage>
</organism>
<comment type="function">
    <text evidence="1">RNA-binding protein involved in pre-mRNA splicing. Interacts with the PRP19C/Prp19 complex/NTC/Nineteen complex which is part of the spliceosome. Involved in regulating splice site selection. Binds preferentially RNA with A/C rich sequences and poly-C stretches.</text>
</comment>
<comment type="subunit">
    <text evidence="1">Interacts with PRPF19.</text>
</comment>
<comment type="subcellular location">
    <subcellularLocation>
        <location evidence="1">Nucleus</location>
    </subcellularLocation>
    <subcellularLocation>
        <location evidence="1">Cytoplasm</location>
    </subcellularLocation>
</comment>
<comment type="domain">
    <text evidence="1">The C-terminal part is necessary for the interaction with the PRP19C/Prp19 complex/NTC/Nineteen complex.</text>
</comment>
<comment type="domain">
    <text evidence="1">The KH domains mediate RNA-binding.</text>
</comment>
<comment type="similarity">
    <text evidence="3">Belongs to the KHDC4 family.</text>
</comment>
<name>KHDC4_DANRE</name>
<accession>Q6NZ18</accession>
<accession>Q7ZVX3</accession>
<evidence type="ECO:0000250" key="1">
    <source>
        <dbReference type="UniProtKB" id="Q7Z7F0"/>
    </source>
</evidence>
<evidence type="ECO:0000256" key="2">
    <source>
        <dbReference type="SAM" id="MobiDB-lite"/>
    </source>
</evidence>
<evidence type="ECO:0000305" key="3"/>
<protein>
    <recommendedName>
        <fullName>KH homology domain-containing protein 4</fullName>
    </recommendedName>
    <alternativeName>
        <fullName evidence="1">Brings lots of money 7</fullName>
    </alternativeName>
    <alternativeName>
        <fullName>Pre-mRNA splicing factor protein khdc4</fullName>
    </alternativeName>
</protein>